<gene>
    <name evidence="1" type="primary">glnE</name>
    <name type="ordered locus">YpAngola_A0293</name>
</gene>
<protein>
    <recommendedName>
        <fullName evidence="1">Bifunctional glutamine synthetase adenylyltransferase/adenylyl-removing enzyme</fullName>
    </recommendedName>
    <alternativeName>
        <fullName evidence="1">ATP:glutamine synthetase adenylyltransferase</fullName>
    </alternativeName>
    <alternativeName>
        <fullName evidence="1">ATase</fullName>
    </alternativeName>
    <domain>
        <recommendedName>
            <fullName evidence="1">Glutamine synthetase adenylyl-L-tyrosine phosphorylase</fullName>
            <ecNumber evidence="1">2.7.7.89</ecNumber>
        </recommendedName>
        <alternativeName>
            <fullName evidence="1">Adenylyl removase</fullName>
            <shortName evidence="1">AR</shortName>
            <shortName evidence="1">AT-N</shortName>
        </alternativeName>
    </domain>
    <domain>
        <recommendedName>
            <fullName evidence="1">Glutamine synthetase adenylyl transferase</fullName>
            <ecNumber evidence="1">2.7.7.42</ecNumber>
        </recommendedName>
        <alternativeName>
            <fullName evidence="1">Adenylyl transferase</fullName>
            <shortName evidence="1">AT</shortName>
            <shortName evidence="1">AT-C</shortName>
        </alternativeName>
    </domain>
</protein>
<evidence type="ECO:0000255" key="1">
    <source>
        <dbReference type="HAMAP-Rule" id="MF_00802"/>
    </source>
</evidence>
<accession>A9R7D6</accession>
<comment type="function">
    <text evidence="1">Involved in the regulation of glutamine synthetase GlnA, a key enzyme in the process to assimilate ammonia. When cellular nitrogen levels are high, the C-terminal adenylyl transferase (AT) inactivates GlnA by covalent transfer of an adenylyl group from ATP to specific tyrosine residue of GlnA, thus reducing its activity. Conversely, when nitrogen levels are low, the N-terminal adenylyl removase (AR) activates GlnA by removing the adenylyl group by phosphorolysis, increasing its activity. The regulatory region of GlnE binds the signal transduction protein PII (GlnB) which indicates the nitrogen status of the cell.</text>
</comment>
<comment type="catalytic activity">
    <reaction evidence="1">
        <text>[glutamine synthetase]-O(4)-(5'-adenylyl)-L-tyrosine + phosphate = [glutamine synthetase]-L-tyrosine + ADP</text>
        <dbReference type="Rhea" id="RHEA:43716"/>
        <dbReference type="Rhea" id="RHEA-COMP:10660"/>
        <dbReference type="Rhea" id="RHEA-COMP:10661"/>
        <dbReference type="ChEBI" id="CHEBI:43474"/>
        <dbReference type="ChEBI" id="CHEBI:46858"/>
        <dbReference type="ChEBI" id="CHEBI:83624"/>
        <dbReference type="ChEBI" id="CHEBI:456216"/>
        <dbReference type="EC" id="2.7.7.89"/>
    </reaction>
</comment>
<comment type="catalytic activity">
    <reaction evidence="1">
        <text>[glutamine synthetase]-L-tyrosine + ATP = [glutamine synthetase]-O(4)-(5'-adenylyl)-L-tyrosine + diphosphate</text>
        <dbReference type="Rhea" id="RHEA:18589"/>
        <dbReference type="Rhea" id="RHEA-COMP:10660"/>
        <dbReference type="Rhea" id="RHEA-COMP:10661"/>
        <dbReference type="ChEBI" id="CHEBI:30616"/>
        <dbReference type="ChEBI" id="CHEBI:33019"/>
        <dbReference type="ChEBI" id="CHEBI:46858"/>
        <dbReference type="ChEBI" id="CHEBI:83624"/>
        <dbReference type="EC" id="2.7.7.42"/>
    </reaction>
</comment>
<comment type="cofactor">
    <cofactor evidence="1">
        <name>Mg(2+)</name>
        <dbReference type="ChEBI" id="CHEBI:18420"/>
    </cofactor>
</comment>
<comment type="similarity">
    <text evidence="1">Belongs to the GlnE family.</text>
</comment>
<organism>
    <name type="scientific">Yersinia pestis bv. Antiqua (strain Angola)</name>
    <dbReference type="NCBI Taxonomy" id="349746"/>
    <lineage>
        <taxon>Bacteria</taxon>
        <taxon>Pseudomonadati</taxon>
        <taxon>Pseudomonadota</taxon>
        <taxon>Gammaproteobacteria</taxon>
        <taxon>Enterobacterales</taxon>
        <taxon>Yersiniaceae</taxon>
        <taxon>Yersinia</taxon>
    </lineage>
</organism>
<feature type="chain" id="PRO_1000133928" description="Bifunctional glutamine synthetase adenylyltransferase/adenylyl-removing enzyme">
    <location>
        <begin position="1"/>
        <end position="951"/>
    </location>
</feature>
<feature type="region of interest" description="Adenylyl removase" evidence="1">
    <location>
        <begin position="1"/>
        <end position="440"/>
    </location>
</feature>
<feature type="region of interest" description="Adenylyl transferase" evidence="1">
    <location>
        <begin position="449"/>
        <end position="951"/>
    </location>
</feature>
<dbReference type="EC" id="2.7.7.89" evidence="1"/>
<dbReference type="EC" id="2.7.7.42" evidence="1"/>
<dbReference type="EMBL" id="CP000901">
    <property type="protein sequence ID" value="ABX85091.1"/>
    <property type="molecule type" value="Genomic_DNA"/>
</dbReference>
<dbReference type="RefSeq" id="WP_002212194.1">
    <property type="nucleotide sequence ID" value="NZ_CP009935.1"/>
</dbReference>
<dbReference type="SMR" id="A9R7D6"/>
<dbReference type="GeneID" id="57973971"/>
<dbReference type="KEGG" id="ypg:YpAngola_A0293"/>
<dbReference type="PATRIC" id="fig|349746.12.peg.1242"/>
<dbReference type="GO" id="GO:0005829">
    <property type="term" value="C:cytosol"/>
    <property type="evidence" value="ECO:0007669"/>
    <property type="project" value="TreeGrafter"/>
</dbReference>
<dbReference type="GO" id="GO:0008882">
    <property type="term" value="F:[glutamate-ammonia-ligase] adenylyltransferase activity"/>
    <property type="evidence" value="ECO:0007669"/>
    <property type="project" value="UniProtKB-UniRule"/>
</dbReference>
<dbReference type="GO" id="GO:0047388">
    <property type="term" value="F:[glutamine synthetase]-adenylyl-L-tyrosine phosphorylase activity"/>
    <property type="evidence" value="ECO:0007669"/>
    <property type="project" value="UniProtKB-EC"/>
</dbReference>
<dbReference type="GO" id="GO:0005524">
    <property type="term" value="F:ATP binding"/>
    <property type="evidence" value="ECO:0007669"/>
    <property type="project" value="UniProtKB-UniRule"/>
</dbReference>
<dbReference type="GO" id="GO:0000287">
    <property type="term" value="F:magnesium ion binding"/>
    <property type="evidence" value="ECO:0007669"/>
    <property type="project" value="UniProtKB-UniRule"/>
</dbReference>
<dbReference type="GO" id="GO:0000820">
    <property type="term" value="P:regulation of glutamine family amino acid metabolic process"/>
    <property type="evidence" value="ECO:0007669"/>
    <property type="project" value="UniProtKB-UniRule"/>
</dbReference>
<dbReference type="CDD" id="cd05401">
    <property type="entry name" value="NT_GlnE_GlnD_like"/>
    <property type="match status" value="2"/>
</dbReference>
<dbReference type="FunFam" id="1.10.4050.10:FF:000001">
    <property type="entry name" value="Bifunctional glutamine synthetase adenylyltransferase/adenylyl-removing enzyme"/>
    <property type="match status" value="1"/>
</dbReference>
<dbReference type="FunFam" id="1.20.120.1510:FF:000001">
    <property type="entry name" value="Bifunctional glutamine synthetase adenylyltransferase/adenylyl-removing enzyme"/>
    <property type="match status" value="1"/>
</dbReference>
<dbReference type="FunFam" id="1.20.120.330:FF:000005">
    <property type="entry name" value="Bifunctional glutamine synthetase adenylyltransferase/adenylyl-removing enzyme"/>
    <property type="match status" value="1"/>
</dbReference>
<dbReference type="FunFam" id="1.20.120.330:FF:000008">
    <property type="entry name" value="Bifunctional glutamine synthetase adenylyltransferase/adenylyl-removing enzyme"/>
    <property type="match status" value="1"/>
</dbReference>
<dbReference type="FunFam" id="3.30.460.10:FF:000009">
    <property type="entry name" value="Bifunctional glutamine synthetase adenylyltransferase/adenylyl-removing enzyme"/>
    <property type="match status" value="1"/>
</dbReference>
<dbReference type="FunFam" id="3.30.460.10:FF:000014">
    <property type="entry name" value="Bifunctional glutamine synthetase adenylyltransferase/adenylyl-removing enzyme"/>
    <property type="match status" value="1"/>
</dbReference>
<dbReference type="Gene3D" id="1.20.120.1510">
    <property type="match status" value="1"/>
</dbReference>
<dbReference type="Gene3D" id="3.30.460.10">
    <property type="entry name" value="Beta Polymerase, domain 2"/>
    <property type="match status" value="2"/>
</dbReference>
<dbReference type="Gene3D" id="1.10.4050.10">
    <property type="entry name" value="Glutamine synthase adenylyltransferase GlnE"/>
    <property type="match status" value="1"/>
</dbReference>
<dbReference type="Gene3D" id="1.20.120.330">
    <property type="entry name" value="Nucleotidyltransferases domain 2"/>
    <property type="match status" value="2"/>
</dbReference>
<dbReference type="HAMAP" id="MF_00802">
    <property type="entry name" value="GlnE"/>
    <property type="match status" value="1"/>
</dbReference>
<dbReference type="InterPro" id="IPR023057">
    <property type="entry name" value="GlnE"/>
</dbReference>
<dbReference type="InterPro" id="IPR005190">
    <property type="entry name" value="GlnE_rpt_dom"/>
</dbReference>
<dbReference type="InterPro" id="IPR043519">
    <property type="entry name" value="NT_sf"/>
</dbReference>
<dbReference type="InterPro" id="IPR013546">
    <property type="entry name" value="PII_UdlTrfase/GS_AdlTrfase"/>
</dbReference>
<dbReference type="NCBIfam" id="NF008292">
    <property type="entry name" value="PRK11072.1"/>
    <property type="match status" value="1"/>
</dbReference>
<dbReference type="PANTHER" id="PTHR30621:SF0">
    <property type="entry name" value="BIFUNCTIONAL GLUTAMINE SYNTHETASE ADENYLYLTRANSFERASE_ADENYLYL-REMOVING ENZYME"/>
    <property type="match status" value="1"/>
</dbReference>
<dbReference type="PANTHER" id="PTHR30621">
    <property type="entry name" value="GLUTAMINE SYNTHETASE ADENYLYLTRANSFERASE"/>
    <property type="match status" value="1"/>
</dbReference>
<dbReference type="Pfam" id="PF08335">
    <property type="entry name" value="GlnD_UR_UTase"/>
    <property type="match status" value="2"/>
</dbReference>
<dbReference type="Pfam" id="PF03710">
    <property type="entry name" value="GlnE"/>
    <property type="match status" value="2"/>
</dbReference>
<dbReference type="SUPFAM" id="SSF81301">
    <property type="entry name" value="Nucleotidyltransferase"/>
    <property type="match status" value="2"/>
</dbReference>
<dbReference type="SUPFAM" id="SSF81593">
    <property type="entry name" value="Nucleotidyltransferase substrate binding subunit/domain"/>
    <property type="match status" value="2"/>
</dbReference>
<sequence length="951" mass="108330">MLPLPSELQIQAQSIKQRFSELPAPPDLRDEDIAVLALSDFVSDMLLIHPQWLEELHQQPPQPQEWQYYSQWLSQALAGVQDEAALLTALRLFRRRVMVRIAWSQVLQTSGTAETLQQLSTLAESMIIAARDWLYQVCCRELGTPCNRQGVPQPLLILGMGKLGGGELNFSSDIDLIFAYPENGQTQGGRRELDNAQFFTRLGQRLIKALDQHTIDGFVYRVDMRLRPFGDSGPLVLSFAALEDYYQEQGRDWERYAMVKARLMGGADDPYSQELRQMLRPFVFRRYIDFSVIQSLRNMKGMIAREVRRRGLKDNIKLGAGGIREIEFITQVFQLIRGGREPRLQERALLPTLQAVAELGLLPEQQVADLSGSYLFLRRLENLLQAIADEQTQTLPNDPLNQARLAWGMGYADWAAMSTALENHMQAVRVVFDDLIGDETPDIGEDPSHGLYKSLWQDVLEESDLAPLTPHLEEAARRQLLATISGFRHDVDKRTIGPRGREVLDQLMPRLFAEVCPRPDANVALSRLILLLLSIVTRTTYLELLVEYHAALKHVIRLCSASPMVASQLARYPLLLDELLDPQSLYQPLAPSAYRDELRQYLLRVPEDDEEQQLEALRQFKQAQQLRIAAGDITEALPVMKVSDHLTYLAEAIIDAVIQQAWNQMVARYGQPSHLQQSEGRGFAVIGYGKLGGWELGYSSDLDLVFLLDCPLDVMTDGDRSIDGRQFYLRLAQRIMHLFSTRTSSGILYEVDARLRPSGEAGMLVSTIEAFADYQRNEAWTWEHQALVRARIVYGSPKLHQQFDAIRQQILCRHREDPQLQQEVREMREKMRNHLGSKQRDIFDIKADAGGITDIEFIAQYLVLRYAASEPRLTRWSDNVRIFESMAHYDIMSPEEAAALTRAYVTMRDEIHHLALQEQSSKVAADSFIAEREQVAASWHKWLAANDANVS</sequence>
<keyword id="KW-0067">ATP-binding</keyword>
<keyword id="KW-0460">Magnesium</keyword>
<keyword id="KW-0511">Multifunctional enzyme</keyword>
<keyword id="KW-0547">Nucleotide-binding</keyword>
<keyword id="KW-0548">Nucleotidyltransferase</keyword>
<keyword id="KW-0808">Transferase</keyword>
<proteinExistence type="inferred from homology"/>
<reference key="1">
    <citation type="journal article" date="2010" name="J. Bacteriol.">
        <title>Genome sequence of the deep-rooted Yersinia pestis strain Angola reveals new insights into the evolution and pangenome of the plague bacterium.</title>
        <authorList>
            <person name="Eppinger M."/>
            <person name="Worsham P.L."/>
            <person name="Nikolich M.P."/>
            <person name="Riley D.R."/>
            <person name="Sebastian Y."/>
            <person name="Mou S."/>
            <person name="Achtman M."/>
            <person name="Lindler L.E."/>
            <person name="Ravel J."/>
        </authorList>
    </citation>
    <scope>NUCLEOTIDE SEQUENCE [LARGE SCALE GENOMIC DNA]</scope>
    <source>
        <strain>Angola</strain>
    </source>
</reference>
<name>GLNE_YERPG</name>